<reference key="1">
    <citation type="journal article" date="1999" name="Nat. Genet.">
        <title>Comparative genomes of Chlamydia pneumoniae and C. trachomatis.</title>
        <authorList>
            <person name="Kalman S."/>
            <person name="Mitchell W.P."/>
            <person name="Marathe R."/>
            <person name="Lammel C.J."/>
            <person name="Fan J."/>
            <person name="Hyman R.W."/>
            <person name="Olinger L."/>
            <person name="Grimwood J."/>
            <person name="Davis R.W."/>
            <person name="Stephens R.S."/>
        </authorList>
    </citation>
    <scope>NUCLEOTIDE SEQUENCE [LARGE SCALE GENOMIC DNA]</scope>
    <source>
        <strain>CWL029</strain>
    </source>
</reference>
<reference key="2">
    <citation type="journal article" date="2000" name="Nucleic Acids Res.">
        <title>Genome sequences of Chlamydia trachomatis MoPn and Chlamydia pneumoniae AR39.</title>
        <authorList>
            <person name="Read T.D."/>
            <person name="Brunham R.C."/>
            <person name="Shen C."/>
            <person name="Gill S.R."/>
            <person name="Heidelberg J.F."/>
            <person name="White O."/>
            <person name="Hickey E.K."/>
            <person name="Peterson J.D."/>
            <person name="Utterback T.R."/>
            <person name="Berry K.J."/>
            <person name="Bass S."/>
            <person name="Linher K.D."/>
            <person name="Weidman J.F."/>
            <person name="Khouri H.M."/>
            <person name="Craven B."/>
            <person name="Bowman C."/>
            <person name="Dodson R.J."/>
            <person name="Gwinn M.L."/>
            <person name="Nelson W.C."/>
            <person name="DeBoy R.T."/>
            <person name="Kolonay J.F."/>
            <person name="McClarty G."/>
            <person name="Salzberg S.L."/>
            <person name="Eisen J.A."/>
            <person name="Fraser C.M."/>
        </authorList>
    </citation>
    <scope>NUCLEOTIDE SEQUENCE [LARGE SCALE GENOMIC DNA]</scope>
    <source>
        <strain>AR39</strain>
    </source>
</reference>
<reference key="3">
    <citation type="journal article" date="2000" name="Nucleic Acids Res.">
        <title>Comparison of whole genome sequences of Chlamydia pneumoniae J138 from Japan and CWL029 from USA.</title>
        <authorList>
            <person name="Shirai M."/>
            <person name="Hirakawa H."/>
            <person name="Kimoto M."/>
            <person name="Tabuchi M."/>
            <person name="Kishi F."/>
            <person name="Ouchi K."/>
            <person name="Shiba T."/>
            <person name="Ishii K."/>
            <person name="Hattori M."/>
            <person name="Kuhara S."/>
            <person name="Nakazawa T."/>
        </authorList>
    </citation>
    <scope>NUCLEOTIDE SEQUENCE [LARGE SCALE GENOMIC DNA]</scope>
    <source>
        <strain>J138</strain>
    </source>
</reference>
<reference key="4">
    <citation type="submission" date="2002-05" db="EMBL/GenBank/DDBJ databases">
        <title>The genome sequence of Chlamydia pneumoniae TW183 and comparison with other Chlamydia strains based on whole genome sequence analysis.</title>
        <authorList>
            <person name="Geng M.M."/>
            <person name="Schuhmacher A."/>
            <person name="Muehldorfer I."/>
            <person name="Bensch K.W."/>
            <person name="Schaefer K.P."/>
            <person name="Schneider S."/>
            <person name="Pohl T."/>
            <person name="Essig A."/>
            <person name="Marre R."/>
            <person name="Melchers K."/>
        </authorList>
    </citation>
    <scope>NUCLEOTIDE SEQUENCE [LARGE SCALE GENOMIC DNA]</scope>
    <source>
        <strain>TW-183</strain>
    </source>
</reference>
<reference key="5">
    <citation type="journal article" date="1999" name="Am. Heart J.">
        <title>Molecular biology of Chlamydia pneumoniae surface proteins and their role in immunopathogenicity.</title>
        <authorList>
            <person name="Christiansen G."/>
            <person name="Boesen T."/>
            <person name="Hjerno K."/>
            <person name="Daugaard L."/>
            <person name="Mygind P."/>
            <person name="Madsen A.S."/>
            <person name="Knudsen K."/>
            <person name="Falk E."/>
            <person name="Birkelund S."/>
        </authorList>
    </citation>
    <scope>NUCLEOTIDE SEQUENCE [GENOMIC DNA] OF 1-262</scope>
    <source>
        <strain>CWL029 / VR1310</strain>
    </source>
</reference>
<protein>
    <recommendedName>
        <fullName>Probable outer membrane protein pmp13</fullName>
    </recommendedName>
    <alternativeName>
        <fullName>Outer membrane protein 14</fullName>
    </alternativeName>
    <alternativeName>
        <fullName>Polymorphic membrane protein 13</fullName>
    </alternativeName>
</protein>
<keyword id="KW-0998">Cell outer membrane</keyword>
<keyword id="KW-0134">Cell wall</keyword>
<keyword id="KW-0472">Membrane</keyword>
<keyword id="KW-0964">Secreted</keyword>
<keyword id="KW-0732">Signal</keyword>
<keyword id="KW-0812">Transmembrane</keyword>
<keyword id="KW-1134">Transmembrane beta strand</keyword>
<comment type="subcellular location">
    <subcellularLocation>
        <location>Secreted</location>
        <location>Cell wall</location>
    </subcellularLocation>
    <subcellularLocation>
        <location evidence="4">Cell outer membrane</location>
        <topology evidence="4">Peripheral membrane protein</topology>
        <orientation evidence="4">Extracellular side</orientation>
    </subcellularLocation>
</comment>
<comment type="developmental stage">
    <text>Elementary body.</text>
</comment>
<comment type="similarity">
    <text evidence="4">Belongs to the PMP outer membrane protein family.</text>
</comment>
<comment type="sequence caution" evidence="4">
    <conflict type="erroneous initiation">
        <sequence resource="EMBL-CDS" id="AAF38156"/>
    </conflict>
</comment>
<dbReference type="EMBL" id="AE001363">
    <property type="protein sequence ID" value="AAD18595.1"/>
    <property type="molecule type" value="Genomic_DNA"/>
</dbReference>
<dbReference type="EMBL" id="AE002161">
    <property type="protein sequence ID" value="AAF38156.1"/>
    <property type="status" value="ALT_INIT"/>
    <property type="molecule type" value="Genomic_DNA"/>
</dbReference>
<dbReference type="EMBL" id="BA000008">
    <property type="protein sequence ID" value="BAA98660.1"/>
    <property type="molecule type" value="Genomic_DNA"/>
</dbReference>
<dbReference type="EMBL" id="AE009440">
    <property type="protein sequence ID" value="AAP98401.1"/>
    <property type="molecule type" value="Genomic_DNA"/>
</dbReference>
<dbReference type="EMBL" id="AJ133034">
    <property type="protein sequence ID" value="CAB37074.1"/>
    <property type="molecule type" value="Genomic_DNA"/>
</dbReference>
<dbReference type="PIR" id="B86547">
    <property type="entry name" value="B86547"/>
</dbReference>
<dbReference type="PIR" id="C81593">
    <property type="entry name" value="C81593"/>
</dbReference>
<dbReference type="PIR" id="F72076">
    <property type="entry name" value="F72076"/>
</dbReference>
<dbReference type="RefSeq" id="NP_224651.1">
    <property type="nucleotide sequence ID" value="NC_000922.1"/>
</dbReference>
<dbReference type="RefSeq" id="WP_010883094.1">
    <property type="nucleotide sequence ID" value="NZ_LN847257.1"/>
</dbReference>
<dbReference type="STRING" id="406984.CPK_ORF00967"/>
<dbReference type="GeneID" id="45050499"/>
<dbReference type="KEGG" id="cpa:CP_0299"/>
<dbReference type="KEGG" id="cpj:pmp_13"/>
<dbReference type="KEGG" id="cpn:CPn_0453"/>
<dbReference type="KEGG" id="cpt:CpB0470"/>
<dbReference type="PATRIC" id="fig|115713.3.peg.504"/>
<dbReference type="eggNOG" id="COG3210">
    <property type="taxonomic scope" value="Bacteria"/>
</dbReference>
<dbReference type="HOGENOM" id="CLU_004549_1_1_0"/>
<dbReference type="OrthoDB" id="16642at2"/>
<dbReference type="Proteomes" id="UP000000583">
    <property type="component" value="Chromosome"/>
</dbReference>
<dbReference type="Proteomes" id="UP000000801">
    <property type="component" value="Chromosome"/>
</dbReference>
<dbReference type="GO" id="GO:0009279">
    <property type="term" value="C:cell outer membrane"/>
    <property type="evidence" value="ECO:0007669"/>
    <property type="project" value="UniProtKB-SubCell"/>
</dbReference>
<dbReference type="GO" id="GO:0005576">
    <property type="term" value="C:extracellular region"/>
    <property type="evidence" value="ECO:0007669"/>
    <property type="project" value="UniProtKB-KW"/>
</dbReference>
<dbReference type="InterPro" id="IPR005546">
    <property type="entry name" value="Autotransporte_beta"/>
</dbReference>
<dbReference type="InterPro" id="IPR036709">
    <property type="entry name" value="Autotransporte_beta_dom_sf"/>
</dbReference>
<dbReference type="InterPro" id="IPR011427">
    <property type="entry name" value="Polymorphic_membr_middle"/>
</dbReference>
<dbReference type="InterPro" id="IPR003368">
    <property type="entry name" value="POMP_repeat"/>
</dbReference>
<dbReference type="NCBIfam" id="TIGR01376">
    <property type="entry name" value="POMP_repeat"/>
    <property type="match status" value="3"/>
</dbReference>
<dbReference type="Pfam" id="PF02415">
    <property type="entry name" value="Chlam_PMP"/>
    <property type="match status" value="4"/>
</dbReference>
<dbReference type="Pfam" id="PF07548">
    <property type="entry name" value="ChlamPMP_M"/>
    <property type="match status" value="1"/>
</dbReference>
<dbReference type="SMART" id="SM00869">
    <property type="entry name" value="Autotransporter"/>
    <property type="match status" value="1"/>
</dbReference>
<dbReference type="SUPFAM" id="SSF103515">
    <property type="entry name" value="Autotransporter"/>
    <property type="match status" value="1"/>
</dbReference>
<dbReference type="PROSITE" id="PS51208">
    <property type="entry name" value="AUTOTRANSPORTER"/>
    <property type="match status" value="1"/>
</dbReference>
<proteinExistence type="evidence at transcript level"/>
<gene>
    <name type="primary">pmp13</name>
    <name type="synonym">omp14</name>
    <name type="ordered locus">CPn_0453</name>
    <name type="ordered locus">CP_0299</name>
    <name type="ordered locus">CpB0470</name>
</gene>
<sequence>MKTSIRKFLISTTLAPCFASTAFTVEVIMPSENFDGSSGKIFPYTTLSDPRGTLCIFSGDLYIANLDNAISRTSSSCFSNRAGALQILGKGGVFSFLNIRSSADGAAISSVITQNPELCPLSFSGFSQMIFDNCESLTSDTSASNVIPHASAIYATTPMLFTNNDSILFQYNRSAGFGAAIRGTSITIENTKKSLLFNGNGSISNGGALTGSAAINLINNSAPVIFSTNATGIYGGAIYLTGGSMLTSGNLSGVLFVNNSSRSGGAIYANGNVTFSNNSDLTFQNNTASPQNSLPAPTPPPTPPAVTPLLGYGGAIFCTPPATPPPTGVSLTISGENSVTFLENIASEQGGALYGKKISIDSNKSTIFLGNTAGKGGAIAIPESGELSLSANQGDILFNKNLSITSGTPTRNSIHFGKDAKFATLGATQGYTLYFYDPITSDDLSAASAAATVVVNPKASADGAYSGTIVFSGETLTATEAATPANATSTLNQKLELEGGTLALRNGATLNVHNFTQDEKSVVIMDAGTTLATTNGANNTDGAITLNKLVINLDSLDGTKAAVVNVQSTNGALTISGTLGLVKNSQDCCDNHGMFNKDLQQVPILELKATSNTVTTTDFSLGTNGYQQSPYGYQGTWEFTIDTTTHTVTGNWKKTGYLPHPERLAPLIPNSLWANVIDLRAVSQASAADGEDVPGKQLSITGITNFFHANHTGDARSYRHMGGGYLINTYTRITPDAALSLGFGQLFTKSKDYLVGHGHSNVYFATVYSNITKSLFGSSRFFSGGTSRVTYSRSNEKVKTSYTKLPKGRCSWSNNCWLGELEGNLPITLSSRILNLKQIIPFVKAEVAYATHGGIQENTPEGRIFGHGHLLNVAVPVGVRFGKNSHNRPDFYTIIVAYAPDVYRHNPDCDTTLPINGATWTSIGNNLTRSTLLVQASSHTSVNDVLEIFGHCGCDIRRTSRQYTLDIGSKLRF</sequence>
<feature type="signal peptide" evidence="1">
    <location>
        <begin position="1"/>
        <end position="24"/>
    </location>
</feature>
<feature type="chain" id="PRO_0000024743" description="Probable outer membrane protein pmp13">
    <location>
        <begin position="25"/>
        <end position="973"/>
    </location>
</feature>
<feature type="domain" description="Autotransporter" evidence="2">
    <location>
        <begin position="691"/>
        <end position="973"/>
    </location>
</feature>
<feature type="region of interest" description="Disordered" evidence="3">
    <location>
        <begin position="284"/>
        <end position="303"/>
    </location>
</feature>
<feature type="compositionally biased region" description="Polar residues" evidence="3">
    <location>
        <begin position="284"/>
        <end position="293"/>
    </location>
</feature>
<feature type="sequence conflict" description="In Ref. 5; CAB37074." evidence="4" ref="5">
    <original>N</original>
    <variation>Y</variation>
    <location>
        <position position="258"/>
    </location>
</feature>
<evidence type="ECO:0000255" key="1"/>
<evidence type="ECO:0000255" key="2">
    <source>
        <dbReference type="PROSITE-ProRule" id="PRU00556"/>
    </source>
</evidence>
<evidence type="ECO:0000256" key="3">
    <source>
        <dbReference type="SAM" id="MobiDB-lite"/>
    </source>
</evidence>
<evidence type="ECO:0000305" key="4"/>
<organism>
    <name type="scientific">Chlamydia pneumoniae</name>
    <name type="common">Chlamydophila pneumoniae</name>
    <dbReference type="NCBI Taxonomy" id="83558"/>
    <lineage>
        <taxon>Bacteria</taxon>
        <taxon>Pseudomonadati</taxon>
        <taxon>Chlamydiota</taxon>
        <taxon>Chlamydiia</taxon>
        <taxon>Chlamydiales</taxon>
        <taxon>Chlamydiaceae</taxon>
        <taxon>Chlamydia/Chlamydophila group</taxon>
        <taxon>Chlamydia</taxon>
    </lineage>
</organism>
<name>PMP13_CHLPN</name>
<accession>Q9Z896</accession>
<accession>Q9K2A1</accession>
<accession>Q9Z4I0</accession>